<feature type="chain" id="PRO_0000310758" description="THO complex subunit 7 homolog">
    <location>
        <begin position="1"/>
        <end position="199"/>
    </location>
</feature>
<feature type="coiled-coil region" evidence="2">
    <location>
        <begin position="73"/>
        <end position="192"/>
    </location>
</feature>
<accession>Q6P643</accession>
<sequence length="199" mass="23146">MGAVTDDEVIRKRLLIDGDGAGDDRRINLLVKSFLKWCNSGSQEEGQYQRMLSSLSQCEFSMGKTLLVHDMNLREMENYEKIYVDIESSIAAAHEKIAECKKQILQAKRIRKNRQEYDALAKVIQQHPDRHETLKQLEALDKELKQLSHTKENVEDKLELRRKQFHVLLSTIHELQQTLENDDKLAEESQESPMETQNP</sequence>
<name>THOC7_XENTR</name>
<keyword id="KW-0175">Coiled coil</keyword>
<keyword id="KW-0963">Cytoplasm</keyword>
<keyword id="KW-0507">mRNA processing</keyword>
<keyword id="KW-0508">mRNA splicing</keyword>
<keyword id="KW-0509">mRNA transport</keyword>
<keyword id="KW-0539">Nucleus</keyword>
<keyword id="KW-1185">Reference proteome</keyword>
<keyword id="KW-0694">RNA-binding</keyword>
<keyword id="KW-0813">Transport</keyword>
<gene>
    <name type="primary">thoc7</name>
</gene>
<protein>
    <recommendedName>
        <fullName>THO complex subunit 7 homolog</fullName>
    </recommendedName>
</protein>
<organism>
    <name type="scientific">Xenopus tropicalis</name>
    <name type="common">Western clawed frog</name>
    <name type="synonym">Silurana tropicalis</name>
    <dbReference type="NCBI Taxonomy" id="8364"/>
    <lineage>
        <taxon>Eukaryota</taxon>
        <taxon>Metazoa</taxon>
        <taxon>Chordata</taxon>
        <taxon>Craniata</taxon>
        <taxon>Vertebrata</taxon>
        <taxon>Euteleostomi</taxon>
        <taxon>Amphibia</taxon>
        <taxon>Batrachia</taxon>
        <taxon>Anura</taxon>
        <taxon>Pipoidea</taxon>
        <taxon>Pipidae</taxon>
        <taxon>Xenopodinae</taxon>
        <taxon>Xenopus</taxon>
        <taxon>Silurana</taxon>
    </lineage>
</organism>
<reference key="1">
    <citation type="submission" date="2003-11" db="EMBL/GenBank/DDBJ databases">
        <authorList>
            <consortium name="NIH - Xenopus Gene Collection (XGC) project"/>
        </authorList>
    </citation>
    <scope>NUCLEOTIDE SEQUENCE [LARGE SCALE MRNA]</scope>
    <source>
        <tissue>Embryo</tissue>
    </source>
</reference>
<proteinExistence type="evidence at transcript level"/>
<comment type="function">
    <text evidence="1">Component of the THO subcomplex of the TREX complex which is thought to couple mRNA transcription, processing and nuclear export, and which specifically associates with spliced mRNA and not with unspliced pre-mRNA. Required for efficient export of polyadenylated RNA. Plays a key structural role in the oligomerization of the THO-DDX39B complex. TREX is recruited to spliced mRNAs by a transcription-independent mechanism, binds to mRNA upstream of the exon-junction complex (EJC) and is recruited in a splicing- and cap-dependent manner to a region near the 5' end of the mRNA where it functions in mRNA export to the cytoplasm via the TAP/NXF1 pathway.</text>
</comment>
<comment type="subunit">
    <text evidence="1">Component of the THO subcomplex, which is composed of thoc1, thoc2, thoc3, thoc5, thoc6 and thoc7. Component of the transcription/export (TREX) complex at least composed of alyref/thoc4, ddx39b, sarnp/cip29, chtop and the THO subcomplex.</text>
</comment>
<comment type="subcellular location">
    <subcellularLocation>
        <location evidence="1">Cytoplasm</location>
    </subcellularLocation>
    <subcellularLocation>
        <location evidence="1">Nucleus</location>
    </subcellularLocation>
    <subcellularLocation>
        <location evidence="1">Nucleus speckle</location>
    </subcellularLocation>
</comment>
<comment type="similarity">
    <text evidence="3">Belongs to the THOC7 family.</text>
</comment>
<evidence type="ECO:0000250" key="1">
    <source>
        <dbReference type="UniProtKB" id="Q6I9Y2"/>
    </source>
</evidence>
<evidence type="ECO:0000255" key="2"/>
<evidence type="ECO:0000305" key="3"/>
<dbReference type="EMBL" id="BC062491">
    <property type="protein sequence ID" value="AAH62491.1"/>
    <property type="molecule type" value="mRNA"/>
</dbReference>
<dbReference type="RefSeq" id="NP_989103.1">
    <property type="nucleotide sequence ID" value="NM_203772.1"/>
</dbReference>
<dbReference type="SMR" id="Q6P643"/>
<dbReference type="FunCoup" id="Q6P643">
    <property type="interactions" value="2601"/>
</dbReference>
<dbReference type="STRING" id="8364.ENSXETP00000025264"/>
<dbReference type="PaxDb" id="8364-ENSXETP00000056903"/>
<dbReference type="DNASU" id="394707"/>
<dbReference type="GeneID" id="394707"/>
<dbReference type="KEGG" id="xtr:394707"/>
<dbReference type="AGR" id="Xenbase:XB-GENE-956290"/>
<dbReference type="CTD" id="80145"/>
<dbReference type="Xenbase" id="XB-GENE-956290">
    <property type="gene designation" value="thoc7"/>
</dbReference>
<dbReference type="eggNOG" id="KOG3215">
    <property type="taxonomic scope" value="Eukaryota"/>
</dbReference>
<dbReference type="InParanoid" id="Q6P643"/>
<dbReference type="OMA" id="WANSKND"/>
<dbReference type="OrthoDB" id="205166at2759"/>
<dbReference type="Proteomes" id="UP000008143">
    <property type="component" value="Chromosome 4"/>
</dbReference>
<dbReference type="Bgee" id="ENSXETG00000006539">
    <property type="expression patterns" value="Expressed in embryo and 14 other cell types or tissues"/>
</dbReference>
<dbReference type="GO" id="GO:0005737">
    <property type="term" value="C:cytoplasm"/>
    <property type="evidence" value="ECO:0000250"/>
    <property type="project" value="UniProtKB"/>
</dbReference>
<dbReference type="GO" id="GO:0016607">
    <property type="term" value="C:nuclear speck"/>
    <property type="evidence" value="ECO:0007669"/>
    <property type="project" value="UniProtKB-SubCell"/>
</dbReference>
<dbReference type="GO" id="GO:0005634">
    <property type="term" value="C:nucleus"/>
    <property type="evidence" value="ECO:0000250"/>
    <property type="project" value="UniProtKB"/>
</dbReference>
<dbReference type="GO" id="GO:0000445">
    <property type="term" value="C:THO complex part of transcription export complex"/>
    <property type="evidence" value="ECO:0007669"/>
    <property type="project" value="InterPro"/>
</dbReference>
<dbReference type="GO" id="GO:0003723">
    <property type="term" value="F:RNA binding"/>
    <property type="evidence" value="ECO:0007669"/>
    <property type="project" value="UniProtKB-KW"/>
</dbReference>
<dbReference type="GO" id="GO:0006397">
    <property type="term" value="P:mRNA processing"/>
    <property type="evidence" value="ECO:0007669"/>
    <property type="project" value="UniProtKB-KW"/>
</dbReference>
<dbReference type="GO" id="GO:0051028">
    <property type="term" value="P:mRNA transport"/>
    <property type="evidence" value="ECO:0007669"/>
    <property type="project" value="UniProtKB-KW"/>
</dbReference>
<dbReference type="GO" id="GO:0008380">
    <property type="term" value="P:RNA splicing"/>
    <property type="evidence" value="ECO:0007669"/>
    <property type="project" value="UniProtKB-KW"/>
</dbReference>
<dbReference type="InterPro" id="IPR008501">
    <property type="entry name" value="THOC7/Mft1"/>
</dbReference>
<dbReference type="PANTHER" id="PTHR23405">
    <property type="entry name" value="MAINTENANCE OF KILLER 16 MAK16 PROTEIN-RELATED"/>
    <property type="match status" value="1"/>
</dbReference>
<dbReference type="PANTHER" id="PTHR23405:SF5">
    <property type="entry name" value="THO COMPLEX SUBUNIT 7 HOMOLOG"/>
    <property type="match status" value="1"/>
</dbReference>
<dbReference type="Pfam" id="PF05615">
    <property type="entry name" value="THOC7"/>
    <property type="match status" value="1"/>
</dbReference>